<proteinExistence type="inferred from homology"/>
<reference key="1">
    <citation type="journal article" date="2007" name="PLoS ONE">
        <title>Paradoxical DNA repair and peroxide resistance gene conservation in Bacillus pumilus SAFR-032.</title>
        <authorList>
            <person name="Gioia J."/>
            <person name="Yerrapragada S."/>
            <person name="Qin X."/>
            <person name="Jiang H."/>
            <person name="Igboeli O.C."/>
            <person name="Muzny D."/>
            <person name="Dugan-Rocha S."/>
            <person name="Ding Y."/>
            <person name="Hawes A."/>
            <person name="Liu W."/>
            <person name="Perez L."/>
            <person name="Kovar C."/>
            <person name="Dinh H."/>
            <person name="Lee S."/>
            <person name="Nazareth L."/>
            <person name="Blyth P."/>
            <person name="Holder M."/>
            <person name="Buhay C."/>
            <person name="Tirumalai M.R."/>
            <person name="Liu Y."/>
            <person name="Dasgupta I."/>
            <person name="Bokhetache L."/>
            <person name="Fujita M."/>
            <person name="Karouia F."/>
            <person name="Eswara Moorthy P."/>
            <person name="Siefert J."/>
            <person name="Uzman A."/>
            <person name="Buzumbo P."/>
            <person name="Verma A."/>
            <person name="Zwiya H."/>
            <person name="McWilliams B.D."/>
            <person name="Olowu A."/>
            <person name="Clinkenbeard K.D."/>
            <person name="Newcombe D."/>
            <person name="Golebiewski L."/>
            <person name="Petrosino J.F."/>
            <person name="Nicholson W.L."/>
            <person name="Fox G.E."/>
            <person name="Venkateswaran K."/>
            <person name="Highlander S.K."/>
            <person name="Weinstock G.M."/>
        </authorList>
    </citation>
    <scope>NUCLEOTIDE SEQUENCE [LARGE SCALE GENOMIC DNA]</scope>
    <source>
        <strain>SAFR-032</strain>
    </source>
</reference>
<keyword id="KW-0963">Cytoplasm</keyword>
<keyword id="KW-0690">Ribosome biogenesis</keyword>
<gene>
    <name evidence="1" type="primary">rimP</name>
    <name type="ordered locus">BPUM_1562</name>
</gene>
<name>RIMP_BACP2</name>
<evidence type="ECO:0000255" key="1">
    <source>
        <dbReference type="HAMAP-Rule" id="MF_01077"/>
    </source>
</evidence>
<accession>A8FDC7</accession>
<organism>
    <name type="scientific">Bacillus pumilus (strain SAFR-032)</name>
    <dbReference type="NCBI Taxonomy" id="315750"/>
    <lineage>
        <taxon>Bacteria</taxon>
        <taxon>Bacillati</taxon>
        <taxon>Bacillota</taxon>
        <taxon>Bacilli</taxon>
        <taxon>Bacillales</taxon>
        <taxon>Bacillaceae</taxon>
        <taxon>Bacillus</taxon>
    </lineage>
</organism>
<comment type="function">
    <text evidence="1">Required for maturation of 30S ribosomal subunits.</text>
</comment>
<comment type="subcellular location">
    <subcellularLocation>
        <location evidence="1">Cytoplasm</location>
    </subcellularLocation>
</comment>
<comment type="similarity">
    <text evidence="1">Belongs to the RimP family.</text>
</comment>
<dbReference type="EMBL" id="CP000813">
    <property type="protein sequence ID" value="ABV62244.1"/>
    <property type="molecule type" value="Genomic_DNA"/>
</dbReference>
<dbReference type="RefSeq" id="WP_003211398.1">
    <property type="nucleotide sequence ID" value="NZ_VEIS01000003.1"/>
</dbReference>
<dbReference type="SMR" id="A8FDC7"/>
<dbReference type="STRING" id="315750.BPUM_1562"/>
<dbReference type="GeneID" id="61770477"/>
<dbReference type="KEGG" id="bpu:BPUM_1562"/>
<dbReference type="eggNOG" id="COG0779">
    <property type="taxonomic scope" value="Bacteria"/>
</dbReference>
<dbReference type="HOGENOM" id="CLU_070525_2_0_9"/>
<dbReference type="OrthoDB" id="9805006at2"/>
<dbReference type="Proteomes" id="UP000001355">
    <property type="component" value="Chromosome"/>
</dbReference>
<dbReference type="GO" id="GO:0005829">
    <property type="term" value="C:cytosol"/>
    <property type="evidence" value="ECO:0007669"/>
    <property type="project" value="TreeGrafter"/>
</dbReference>
<dbReference type="GO" id="GO:0000028">
    <property type="term" value="P:ribosomal small subunit assembly"/>
    <property type="evidence" value="ECO:0007669"/>
    <property type="project" value="TreeGrafter"/>
</dbReference>
<dbReference type="GO" id="GO:0006412">
    <property type="term" value="P:translation"/>
    <property type="evidence" value="ECO:0007669"/>
    <property type="project" value="TreeGrafter"/>
</dbReference>
<dbReference type="CDD" id="cd01734">
    <property type="entry name" value="YlxS_C"/>
    <property type="match status" value="1"/>
</dbReference>
<dbReference type="FunFam" id="3.30.300.70:FF:000001">
    <property type="entry name" value="Ribosome maturation factor RimP"/>
    <property type="match status" value="1"/>
</dbReference>
<dbReference type="Gene3D" id="2.30.30.180">
    <property type="entry name" value="Ribosome maturation factor RimP, C-terminal domain"/>
    <property type="match status" value="1"/>
</dbReference>
<dbReference type="Gene3D" id="3.30.300.70">
    <property type="entry name" value="RimP-like superfamily, N-terminal"/>
    <property type="match status" value="1"/>
</dbReference>
<dbReference type="HAMAP" id="MF_01077">
    <property type="entry name" value="RimP"/>
    <property type="match status" value="1"/>
</dbReference>
<dbReference type="InterPro" id="IPR003728">
    <property type="entry name" value="Ribosome_maturation_RimP"/>
</dbReference>
<dbReference type="InterPro" id="IPR028998">
    <property type="entry name" value="RimP_C"/>
</dbReference>
<dbReference type="InterPro" id="IPR036847">
    <property type="entry name" value="RimP_C_sf"/>
</dbReference>
<dbReference type="InterPro" id="IPR028989">
    <property type="entry name" value="RimP_N"/>
</dbReference>
<dbReference type="InterPro" id="IPR035956">
    <property type="entry name" value="RimP_N_sf"/>
</dbReference>
<dbReference type="NCBIfam" id="NF000928">
    <property type="entry name" value="PRK00092.1-2"/>
    <property type="match status" value="1"/>
</dbReference>
<dbReference type="PANTHER" id="PTHR33867">
    <property type="entry name" value="RIBOSOME MATURATION FACTOR RIMP"/>
    <property type="match status" value="1"/>
</dbReference>
<dbReference type="PANTHER" id="PTHR33867:SF1">
    <property type="entry name" value="RIBOSOME MATURATION FACTOR RIMP"/>
    <property type="match status" value="1"/>
</dbReference>
<dbReference type="Pfam" id="PF17384">
    <property type="entry name" value="DUF150_C"/>
    <property type="match status" value="1"/>
</dbReference>
<dbReference type="Pfam" id="PF02576">
    <property type="entry name" value="RimP_N"/>
    <property type="match status" value="1"/>
</dbReference>
<dbReference type="SUPFAM" id="SSF74942">
    <property type="entry name" value="YhbC-like, C-terminal domain"/>
    <property type="match status" value="1"/>
</dbReference>
<dbReference type="SUPFAM" id="SSF75420">
    <property type="entry name" value="YhbC-like, N-terminal domain"/>
    <property type="match status" value="1"/>
</dbReference>
<protein>
    <recommendedName>
        <fullName evidence="1">Ribosome maturation factor RimP</fullName>
    </recommendedName>
</protein>
<sequence length="157" mass="17636">MSKKVVDVVSEMVQPILDGLQLELVDVEFVKEGQNWFLRVFIDSDKGVDIEECAKVSEALSEKLDEADPISQNYFLEVSSPGAERPLKKKADFEKALGKNVFMKTYEPIDGEKAFEGELTSFDGEIATVTVKIKTRKKEINIPYEKIANARLAVSFN</sequence>
<feature type="chain" id="PRO_1000064682" description="Ribosome maturation factor RimP">
    <location>
        <begin position="1"/>
        <end position="157"/>
    </location>
</feature>